<accession>Q9FX45</accession>
<gene>
    <name evidence="5" type="primary">ORRM6</name>
    <name evidence="6" type="ordered locus">At1g73530</name>
    <name evidence="7" type="ORF">T9L24.48</name>
</gene>
<sequence>MAISLGRVVVPSCTISGDRLFIPNFSAICSVSCGRINVGTGVISARRRRDIGGVLISSCLSTDSSSSPPSSSSGPKTKLYVSGLSFRTTEDTLRDTFEQFGNLIHMNMVMDKVANRPKGFAFLRYETEEEAMKAIQGMHGKFLDGRVIFVEEAKTRSDMSRAKPRRDFPKPQSKPRTFRTW</sequence>
<feature type="transit peptide" description="Chloroplast" evidence="1">
    <location>
        <begin position="1"/>
        <end position="44"/>
    </location>
</feature>
<feature type="chain" id="PRO_0000439870" description="Organelle RRM domain-containing protein 6, chloroplastic">
    <location>
        <begin position="45"/>
        <end position="181"/>
    </location>
</feature>
<feature type="domain" description="RRM" evidence="2">
    <location>
        <begin position="77"/>
        <end position="155"/>
    </location>
</feature>
<feature type="region of interest" description="Disordered" evidence="3">
    <location>
        <begin position="155"/>
        <end position="181"/>
    </location>
</feature>
<feature type="compositionally biased region" description="Basic and acidic residues" evidence="3">
    <location>
        <begin position="155"/>
        <end position="169"/>
    </location>
</feature>
<keyword id="KW-0150">Chloroplast</keyword>
<keyword id="KW-0507">mRNA processing</keyword>
<keyword id="KW-0934">Plastid</keyword>
<keyword id="KW-1185">Reference proteome</keyword>
<keyword id="KW-0694">RNA-binding</keyword>
<keyword id="KW-0809">Transit peptide</keyword>
<protein>
    <recommendedName>
        <fullName evidence="5">Organelle RRM domain-containing protein 6, chloroplastic</fullName>
    </recommendedName>
</protein>
<evidence type="ECO:0000255" key="1"/>
<evidence type="ECO:0000255" key="2">
    <source>
        <dbReference type="PROSITE-ProRule" id="PRU00176"/>
    </source>
</evidence>
<evidence type="ECO:0000256" key="3">
    <source>
        <dbReference type="SAM" id="MobiDB-lite"/>
    </source>
</evidence>
<evidence type="ECO:0000269" key="4">
    <source>
    </source>
</evidence>
<evidence type="ECO:0000303" key="5">
    <source>
    </source>
</evidence>
<evidence type="ECO:0000312" key="6">
    <source>
        <dbReference type="Araport" id="AT1G73530"/>
    </source>
</evidence>
<evidence type="ECO:0000312" key="7">
    <source>
        <dbReference type="EMBL" id="AAG30979.1"/>
    </source>
</evidence>
<dbReference type="EMBL" id="AC012396">
    <property type="protein sequence ID" value="AAG30979.1"/>
    <property type="molecule type" value="Genomic_DNA"/>
</dbReference>
<dbReference type="EMBL" id="CP002684">
    <property type="protein sequence ID" value="AEE35472.1"/>
    <property type="molecule type" value="Genomic_DNA"/>
</dbReference>
<dbReference type="EMBL" id="BT021981">
    <property type="protein sequence ID" value="AAY17418.1"/>
    <property type="molecule type" value="mRNA"/>
</dbReference>
<dbReference type="EMBL" id="BT028910">
    <property type="protein sequence ID" value="ABI49457.1"/>
    <property type="molecule type" value="mRNA"/>
</dbReference>
<dbReference type="PIR" id="A96762">
    <property type="entry name" value="A96762"/>
</dbReference>
<dbReference type="RefSeq" id="NP_177494.1">
    <property type="nucleotide sequence ID" value="NM_106011.4"/>
</dbReference>
<dbReference type="SMR" id="Q9FX45"/>
<dbReference type="FunCoup" id="Q9FX45">
    <property type="interactions" value="646"/>
</dbReference>
<dbReference type="STRING" id="3702.Q9FX45"/>
<dbReference type="iPTMnet" id="Q9FX45"/>
<dbReference type="MetOSite" id="Q9FX45"/>
<dbReference type="PaxDb" id="3702-AT1G73530.1"/>
<dbReference type="ProteomicsDB" id="248908"/>
<dbReference type="EnsemblPlants" id="AT1G73530.1">
    <property type="protein sequence ID" value="AT1G73530.1"/>
    <property type="gene ID" value="AT1G73530"/>
</dbReference>
<dbReference type="GeneID" id="843687"/>
<dbReference type="Gramene" id="AT1G73530.1">
    <property type="protein sequence ID" value="AT1G73530.1"/>
    <property type="gene ID" value="AT1G73530"/>
</dbReference>
<dbReference type="KEGG" id="ath:AT1G73530"/>
<dbReference type="Araport" id="AT1G73530"/>
<dbReference type="TAIR" id="AT1G73530">
    <property type="gene designation" value="ORRM6"/>
</dbReference>
<dbReference type="eggNOG" id="KOG0118">
    <property type="taxonomic scope" value="Eukaryota"/>
</dbReference>
<dbReference type="HOGENOM" id="CLU_1429890_0_0_1"/>
<dbReference type="InParanoid" id="Q9FX45"/>
<dbReference type="OMA" id="IQGMHGK"/>
<dbReference type="PhylomeDB" id="Q9FX45"/>
<dbReference type="PRO" id="PR:Q9FX45"/>
<dbReference type="Proteomes" id="UP000006548">
    <property type="component" value="Chromosome 1"/>
</dbReference>
<dbReference type="ExpressionAtlas" id="Q9FX45">
    <property type="expression patterns" value="baseline and differential"/>
</dbReference>
<dbReference type="GO" id="GO:0009507">
    <property type="term" value="C:chloroplast"/>
    <property type="evidence" value="ECO:0000314"/>
    <property type="project" value="UniProtKB"/>
</dbReference>
<dbReference type="GO" id="GO:0003729">
    <property type="term" value="F:mRNA binding"/>
    <property type="evidence" value="ECO:0000314"/>
    <property type="project" value="TAIR"/>
</dbReference>
<dbReference type="GO" id="GO:1900871">
    <property type="term" value="P:chloroplast mRNA modification"/>
    <property type="evidence" value="ECO:0000315"/>
    <property type="project" value="UniProtKB"/>
</dbReference>
<dbReference type="GO" id="GO:0016554">
    <property type="term" value="P:cytidine to uridine editing"/>
    <property type="evidence" value="ECO:0000315"/>
    <property type="project" value="UniProtKB"/>
</dbReference>
<dbReference type="GO" id="GO:0006397">
    <property type="term" value="P:mRNA processing"/>
    <property type="evidence" value="ECO:0007669"/>
    <property type="project" value="UniProtKB-KW"/>
</dbReference>
<dbReference type="CDD" id="cd00590">
    <property type="entry name" value="RRM_SF"/>
    <property type="match status" value="1"/>
</dbReference>
<dbReference type="FunFam" id="3.30.70.330:FF:001415">
    <property type="entry name" value="Organelle RRM domain-containing protein 6, chloroplastic"/>
    <property type="match status" value="1"/>
</dbReference>
<dbReference type="Gene3D" id="3.30.70.330">
    <property type="match status" value="1"/>
</dbReference>
<dbReference type="InterPro" id="IPR012677">
    <property type="entry name" value="Nucleotide-bd_a/b_plait_sf"/>
</dbReference>
<dbReference type="InterPro" id="IPR035979">
    <property type="entry name" value="RBD_domain_sf"/>
</dbReference>
<dbReference type="InterPro" id="IPR000504">
    <property type="entry name" value="RRM_dom"/>
</dbReference>
<dbReference type="InterPro" id="IPR003954">
    <property type="entry name" value="RRM_dom_euk"/>
</dbReference>
<dbReference type="PANTHER" id="PTHR48029">
    <property type="entry name" value="NUCLEOLAR PROTEIN 8"/>
    <property type="match status" value="1"/>
</dbReference>
<dbReference type="PANTHER" id="PTHR48029:SF1">
    <property type="entry name" value="NUCLEOLAR PROTEIN 8"/>
    <property type="match status" value="1"/>
</dbReference>
<dbReference type="Pfam" id="PF00076">
    <property type="entry name" value="RRM_1"/>
    <property type="match status" value="1"/>
</dbReference>
<dbReference type="SMART" id="SM00360">
    <property type="entry name" value="RRM"/>
    <property type="match status" value="1"/>
</dbReference>
<dbReference type="SMART" id="SM00361">
    <property type="entry name" value="RRM_1"/>
    <property type="match status" value="1"/>
</dbReference>
<dbReference type="SUPFAM" id="SSF54928">
    <property type="entry name" value="RNA-binding domain, RBD"/>
    <property type="match status" value="1"/>
</dbReference>
<dbReference type="PROSITE" id="PS50102">
    <property type="entry name" value="RRM"/>
    <property type="match status" value="1"/>
</dbReference>
<comment type="function">
    <text evidence="4">Involved in C-to-U editing of chloroplastic RNA. Required for the photosynthetic subunit psbF transcript editing in chloroplast.</text>
</comment>
<comment type="subunit">
    <text evidence="4">Interacts with MORF8/RIP1, MORF2/RIP2, MORF9/RIP9 and VAR3/OZ1.</text>
</comment>
<comment type="subcellular location">
    <subcellularLocation>
        <location evidence="4">Plastid</location>
        <location evidence="4">Chloroplast</location>
    </subcellularLocation>
</comment>
<comment type="disruption phenotype">
    <text evidence="4">Dwarf plants and pale green leaf phenotype.</text>
</comment>
<reference key="1">
    <citation type="journal article" date="2000" name="Nature">
        <title>Sequence and analysis of chromosome 1 of the plant Arabidopsis thaliana.</title>
        <authorList>
            <person name="Theologis A."/>
            <person name="Ecker J.R."/>
            <person name="Palm C.J."/>
            <person name="Federspiel N.A."/>
            <person name="Kaul S."/>
            <person name="White O."/>
            <person name="Alonso J."/>
            <person name="Altafi H."/>
            <person name="Araujo R."/>
            <person name="Bowman C.L."/>
            <person name="Brooks S.Y."/>
            <person name="Buehler E."/>
            <person name="Chan A."/>
            <person name="Chao Q."/>
            <person name="Chen H."/>
            <person name="Cheuk R.F."/>
            <person name="Chin C.W."/>
            <person name="Chung M.K."/>
            <person name="Conn L."/>
            <person name="Conway A.B."/>
            <person name="Conway A.R."/>
            <person name="Creasy T.H."/>
            <person name="Dewar K."/>
            <person name="Dunn P."/>
            <person name="Etgu P."/>
            <person name="Feldblyum T.V."/>
            <person name="Feng J.-D."/>
            <person name="Fong B."/>
            <person name="Fujii C.Y."/>
            <person name="Gill J.E."/>
            <person name="Goldsmith A.D."/>
            <person name="Haas B."/>
            <person name="Hansen N.F."/>
            <person name="Hughes B."/>
            <person name="Huizar L."/>
            <person name="Hunter J.L."/>
            <person name="Jenkins J."/>
            <person name="Johnson-Hopson C."/>
            <person name="Khan S."/>
            <person name="Khaykin E."/>
            <person name="Kim C.J."/>
            <person name="Koo H.L."/>
            <person name="Kremenetskaia I."/>
            <person name="Kurtz D.B."/>
            <person name="Kwan A."/>
            <person name="Lam B."/>
            <person name="Langin-Hooper S."/>
            <person name="Lee A."/>
            <person name="Lee J.M."/>
            <person name="Lenz C.A."/>
            <person name="Li J.H."/>
            <person name="Li Y.-P."/>
            <person name="Lin X."/>
            <person name="Liu S.X."/>
            <person name="Liu Z.A."/>
            <person name="Luros J.S."/>
            <person name="Maiti R."/>
            <person name="Marziali A."/>
            <person name="Militscher J."/>
            <person name="Miranda M."/>
            <person name="Nguyen M."/>
            <person name="Nierman W.C."/>
            <person name="Osborne B.I."/>
            <person name="Pai G."/>
            <person name="Peterson J."/>
            <person name="Pham P.K."/>
            <person name="Rizzo M."/>
            <person name="Rooney T."/>
            <person name="Rowley D."/>
            <person name="Sakano H."/>
            <person name="Salzberg S.L."/>
            <person name="Schwartz J.R."/>
            <person name="Shinn P."/>
            <person name="Southwick A.M."/>
            <person name="Sun H."/>
            <person name="Tallon L.J."/>
            <person name="Tambunga G."/>
            <person name="Toriumi M.J."/>
            <person name="Town C.D."/>
            <person name="Utterback T."/>
            <person name="Van Aken S."/>
            <person name="Vaysberg M."/>
            <person name="Vysotskaia V.S."/>
            <person name="Walker M."/>
            <person name="Wu D."/>
            <person name="Yu G."/>
            <person name="Fraser C.M."/>
            <person name="Venter J.C."/>
            <person name="Davis R.W."/>
        </authorList>
    </citation>
    <scope>NUCLEOTIDE SEQUENCE [LARGE SCALE GENOMIC DNA]</scope>
    <source>
        <strain>cv. Columbia</strain>
    </source>
</reference>
<reference key="2">
    <citation type="journal article" date="2017" name="Plant J.">
        <title>Araport11: a complete reannotation of the Arabidopsis thaliana reference genome.</title>
        <authorList>
            <person name="Cheng C.Y."/>
            <person name="Krishnakumar V."/>
            <person name="Chan A.P."/>
            <person name="Thibaud-Nissen F."/>
            <person name="Schobel S."/>
            <person name="Town C.D."/>
        </authorList>
    </citation>
    <scope>GENOME REANNOTATION</scope>
    <source>
        <strain>cv. Columbia</strain>
    </source>
</reference>
<reference key="3">
    <citation type="submission" date="2006-09" db="EMBL/GenBank/DDBJ databases">
        <title>Arabidopsis ORF Clones.</title>
        <authorList>
            <person name="Bautista V.R."/>
            <person name="Kim C.J."/>
            <person name="Chen H."/>
            <person name="Quinitio C."/>
            <person name="Ecker J.R."/>
        </authorList>
    </citation>
    <scope>NUCLEOTIDE SEQUENCE [LARGE SCALE MRNA]</scope>
    <source>
        <strain>cv. Columbia</strain>
    </source>
</reference>
<reference key="4">
    <citation type="journal article" date="2017" name="Plant Physiol.">
        <title>An organelle RNA recognition motif protein is required for photosynthetic subunit psbF transcript editing.</title>
        <authorList>
            <person name="Hackett J.B."/>
            <person name="Shi X."/>
            <person name="Kobylarz A.T."/>
            <person name="Lucas M.K."/>
            <person name="Wessendorf R.L."/>
            <person name="Hines K.M."/>
            <person name="Bentolila S."/>
            <person name="Hanson M.R."/>
            <person name="Lu Y."/>
        </authorList>
    </citation>
    <scope>FUNCTION</scope>
    <scope>INTERACTION WITH MORF8/RIP1; MORF2/RIP2; MORF9/RIP9 AND VAR3/OZ1</scope>
    <scope>SUBCELLULAR LOCATION</scope>
    <scope>DISRUPTION PHENOTYPE</scope>
</reference>
<organism>
    <name type="scientific">Arabidopsis thaliana</name>
    <name type="common">Mouse-ear cress</name>
    <dbReference type="NCBI Taxonomy" id="3702"/>
    <lineage>
        <taxon>Eukaryota</taxon>
        <taxon>Viridiplantae</taxon>
        <taxon>Streptophyta</taxon>
        <taxon>Embryophyta</taxon>
        <taxon>Tracheophyta</taxon>
        <taxon>Spermatophyta</taxon>
        <taxon>Magnoliopsida</taxon>
        <taxon>eudicotyledons</taxon>
        <taxon>Gunneridae</taxon>
        <taxon>Pentapetalae</taxon>
        <taxon>rosids</taxon>
        <taxon>malvids</taxon>
        <taxon>Brassicales</taxon>
        <taxon>Brassicaceae</taxon>
        <taxon>Camelineae</taxon>
        <taxon>Arabidopsis</taxon>
    </lineage>
</organism>
<proteinExistence type="evidence at protein level"/>
<name>ORRM6_ARATH</name>